<proteinExistence type="evidence at transcript level"/>
<sequence length="262" mass="30334">MPLHVKWPFPAVPRLTWTLASSVVMGLVGTYSCFWTKYMNHLTVHNKEVLYELIENRGPATPLITVSNHQSCMDDPHLWGILKLRHIWNLKLMRWTPAAADICFTKELHSHFFSLGKCVPVCRGDGVYQKGMDFILEKLNHGDWVHIFPEGKVNMSSEFLRFKWGIGRLIAECHLNPIILPLWHVGMNDVLPNSPPYFPRFGQKITVLIGKPFSTLPVLERLRAENKSAVEMRKALTDFIQEEFQRLKMQAEQLHNHFQPGR</sequence>
<reference evidence="20" key="1">
    <citation type="submission" date="2003-02" db="EMBL/GenBank/DDBJ databases">
        <title>Identification and characterization of murine tafazzins.</title>
        <authorList>
            <person name="Lu B."/>
            <person name="Gong Y."/>
            <person name="Hatch G.M."/>
            <person name="Choy P.C."/>
        </authorList>
    </citation>
    <scope>NUCLEOTIDE SEQUENCE [MRNA] (ISOFORMS 1 AND 2)</scope>
    <source>
        <strain evidence="20">C57BL/6J</strain>
    </source>
</reference>
<reference key="2">
    <citation type="journal article" date="2005" name="Science">
        <title>The transcriptional landscape of the mammalian genome.</title>
        <authorList>
            <person name="Carninci P."/>
            <person name="Kasukawa T."/>
            <person name="Katayama S."/>
            <person name="Gough J."/>
            <person name="Frith M.C."/>
            <person name="Maeda N."/>
            <person name="Oyama R."/>
            <person name="Ravasi T."/>
            <person name="Lenhard B."/>
            <person name="Wells C."/>
            <person name="Kodzius R."/>
            <person name="Shimokawa K."/>
            <person name="Bajic V.B."/>
            <person name="Brenner S.E."/>
            <person name="Batalov S."/>
            <person name="Forrest A.R."/>
            <person name="Zavolan M."/>
            <person name="Davis M.J."/>
            <person name="Wilming L.G."/>
            <person name="Aidinis V."/>
            <person name="Allen J.E."/>
            <person name="Ambesi-Impiombato A."/>
            <person name="Apweiler R."/>
            <person name="Aturaliya R.N."/>
            <person name="Bailey T.L."/>
            <person name="Bansal M."/>
            <person name="Baxter L."/>
            <person name="Beisel K.W."/>
            <person name="Bersano T."/>
            <person name="Bono H."/>
            <person name="Chalk A.M."/>
            <person name="Chiu K.P."/>
            <person name="Choudhary V."/>
            <person name="Christoffels A."/>
            <person name="Clutterbuck D.R."/>
            <person name="Crowe M.L."/>
            <person name="Dalla E."/>
            <person name="Dalrymple B.P."/>
            <person name="de Bono B."/>
            <person name="Della Gatta G."/>
            <person name="di Bernardo D."/>
            <person name="Down T."/>
            <person name="Engstrom P."/>
            <person name="Fagiolini M."/>
            <person name="Faulkner G."/>
            <person name="Fletcher C.F."/>
            <person name="Fukushima T."/>
            <person name="Furuno M."/>
            <person name="Futaki S."/>
            <person name="Gariboldi M."/>
            <person name="Georgii-Hemming P."/>
            <person name="Gingeras T.R."/>
            <person name="Gojobori T."/>
            <person name="Green R.E."/>
            <person name="Gustincich S."/>
            <person name="Harbers M."/>
            <person name="Hayashi Y."/>
            <person name="Hensch T.K."/>
            <person name="Hirokawa N."/>
            <person name="Hill D."/>
            <person name="Huminiecki L."/>
            <person name="Iacono M."/>
            <person name="Ikeo K."/>
            <person name="Iwama A."/>
            <person name="Ishikawa T."/>
            <person name="Jakt M."/>
            <person name="Kanapin A."/>
            <person name="Katoh M."/>
            <person name="Kawasawa Y."/>
            <person name="Kelso J."/>
            <person name="Kitamura H."/>
            <person name="Kitano H."/>
            <person name="Kollias G."/>
            <person name="Krishnan S.P."/>
            <person name="Kruger A."/>
            <person name="Kummerfeld S.K."/>
            <person name="Kurochkin I.V."/>
            <person name="Lareau L.F."/>
            <person name="Lazarevic D."/>
            <person name="Lipovich L."/>
            <person name="Liu J."/>
            <person name="Liuni S."/>
            <person name="McWilliam S."/>
            <person name="Madan Babu M."/>
            <person name="Madera M."/>
            <person name="Marchionni L."/>
            <person name="Matsuda H."/>
            <person name="Matsuzawa S."/>
            <person name="Miki H."/>
            <person name="Mignone F."/>
            <person name="Miyake S."/>
            <person name="Morris K."/>
            <person name="Mottagui-Tabar S."/>
            <person name="Mulder N."/>
            <person name="Nakano N."/>
            <person name="Nakauchi H."/>
            <person name="Ng P."/>
            <person name="Nilsson R."/>
            <person name="Nishiguchi S."/>
            <person name="Nishikawa S."/>
            <person name="Nori F."/>
            <person name="Ohara O."/>
            <person name="Okazaki Y."/>
            <person name="Orlando V."/>
            <person name="Pang K.C."/>
            <person name="Pavan W.J."/>
            <person name="Pavesi G."/>
            <person name="Pesole G."/>
            <person name="Petrovsky N."/>
            <person name="Piazza S."/>
            <person name="Reed J."/>
            <person name="Reid J.F."/>
            <person name="Ring B.Z."/>
            <person name="Ringwald M."/>
            <person name="Rost B."/>
            <person name="Ruan Y."/>
            <person name="Salzberg S.L."/>
            <person name="Sandelin A."/>
            <person name="Schneider C."/>
            <person name="Schoenbach C."/>
            <person name="Sekiguchi K."/>
            <person name="Semple C.A."/>
            <person name="Seno S."/>
            <person name="Sessa L."/>
            <person name="Sheng Y."/>
            <person name="Shibata Y."/>
            <person name="Shimada H."/>
            <person name="Shimada K."/>
            <person name="Silva D."/>
            <person name="Sinclair B."/>
            <person name="Sperling S."/>
            <person name="Stupka E."/>
            <person name="Sugiura K."/>
            <person name="Sultana R."/>
            <person name="Takenaka Y."/>
            <person name="Taki K."/>
            <person name="Tammoja K."/>
            <person name="Tan S.L."/>
            <person name="Tang S."/>
            <person name="Taylor M.S."/>
            <person name="Tegner J."/>
            <person name="Teichmann S.A."/>
            <person name="Ueda H.R."/>
            <person name="van Nimwegen E."/>
            <person name="Verardo R."/>
            <person name="Wei C.L."/>
            <person name="Yagi K."/>
            <person name="Yamanishi H."/>
            <person name="Zabarovsky E."/>
            <person name="Zhu S."/>
            <person name="Zimmer A."/>
            <person name="Hide W."/>
            <person name="Bult C."/>
            <person name="Grimmond S.M."/>
            <person name="Teasdale R.D."/>
            <person name="Liu E.T."/>
            <person name="Brusic V."/>
            <person name="Quackenbush J."/>
            <person name="Wahlestedt C."/>
            <person name="Mattick J.S."/>
            <person name="Hume D.A."/>
            <person name="Kai C."/>
            <person name="Sasaki D."/>
            <person name="Tomaru Y."/>
            <person name="Fukuda S."/>
            <person name="Kanamori-Katayama M."/>
            <person name="Suzuki M."/>
            <person name="Aoki J."/>
            <person name="Arakawa T."/>
            <person name="Iida J."/>
            <person name="Imamura K."/>
            <person name="Itoh M."/>
            <person name="Kato T."/>
            <person name="Kawaji H."/>
            <person name="Kawagashira N."/>
            <person name="Kawashima T."/>
            <person name="Kojima M."/>
            <person name="Kondo S."/>
            <person name="Konno H."/>
            <person name="Nakano K."/>
            <person name="Ninomiya N."/>
            <person name="Nishio T."/>
            <person name="Okada M."/>
            <person name="Plessy C."/>
            <person name="Shibata K."/>
            <person name="Shiraki T."/>
            <person name="Suzuki S."/>
            <person name="Tagami M."/>
            <person name="Waki K."/>
            <person name="Watahiki A."/>
            <person name="Okamura-Oho Y."/>
            <person name="Suzuki H."/>
            <person name="Kawai J."/>
            <person name="Hayashizaki Y."/>
        </authorList>
    </citation>
    <scope>NUCLEOTIDE SEQUENCE [LARGE SCALE MRNA] (ISOFORMS 1 AND 2)</scope>
    <source>
        <strain evidence="21">C57BL/6J</strain>
        <tissue evidence="21">Spleen</tissue>
    </source>
</reference>
<reference evidence="23" key="3">
    <citation type="journal article" date="2009" name="PLoS Biol.">
        <title>Lineage-specific biology revealed by a finished genome assembly of the mouse.</title>
        <authorList>
            <person name="Church D.M."/>
            <person name="Goodstadt L."/>
            <person name="Hillier L.W."/>
            <person name="Zody M.C."/>
            <person name="Goldstein S."/>
            <person name="She X."/>
            <person name="Bult C.J."/>
            <person name="Agarwala R."/>
            <person name="Cherry J.L."/>
            <person name="DiCuccio M."/>
            <person name="Hlavina W."/>
            <person name="Kapustin Y."/>
            <person name="Meric P."/>
            <person name="Maglott D."/>
            <person name="Birtle Z."/>
            <person name="Marques A.C."/>
            <person name="Graves T."/>
            <person name="Zhou S."/>
            <person name="Teague B."/>
            <person name="Potamousis K."/>
            <person name="Churas C."/>
            <person name="Place M."/>
            <person name="Herschleb J."/>
            <person name="Runnheim R."/>
            <person name="Forrest D."/>
            <person name="Amos-Landgraf J."/>
            <person name="Schwartz D.C."/>
            <person name="Cheng Z."/>
            <person name="Lindblad-Toh K."/>
            <person name="Eichler E.E."/>
            <person name="Ponting C.P."/>
        </authorList>
    </citation>
    <scope>NUCLEOTIDE SEQUENCE [LARGE SCALE GENOMIC DNA]</scope>
    <source>
        <strain evidence="23">C57BL/6J</strain>
    </source>
</reference>
<reference evidence="19" key="4">
    <citation type="journal article" date="2004" name="Genome Res.">
        <title>The status, quality, and expansion of the NIH full-length cDNA project: the Mammalian Gene Collection (MGC).</title>
        <authorList>
            <consortium name="The MGC Project Team"/>
        </authorList>
    </citation>
    <scope>NUCLEOTIDE SEQUENCE [LARGE SCALE MRNA] (ISOFORM 1)</scope>
    <source>
        <strain evidence="19">FVB/N</strain>
        <tissue evidence="19">Kidney</tissue>
    </source>
</reference>
<reference evidence="18" key="5">
    <citation type="journal article" date="2004" name="Biochem. Cell Biol.">
        <title>Complex expression pattern of the Barth syndrome gene product tafazzin in human cell lines and murine tissues.</title>
        <authorList>
            <person name="Lu B."/>
            <person name="Kelher M.R."/>
            <person name="Lee D.P."/>
            <person name="Lewin T.M."/>
            <person name="Coleman R.A."/>
            <person name="Choy P.C."/>
            <person name="Hatch G.M."/>
        </authorList>
    </citation>
    <scope>TISSUE SPECIFICITY</scope>
    <scope>ALTERNATIVE SPLICING</scope>
</reference>
<reference evidence="18" key="6">
    <citation type="journal article" date="2009" name="Mitochondrion">
        <title>Distinct effects of tafazzin deletion in differentiated and undifferentiated mitochondria.</title>
        <authorList>
            <person name="Acehan D."/>
            <person name="Khuchua Z."/>
            <person name="Houtkooper R.H."/>
            <person name="Malhotra A."/>
            <person name="Kaufman J."/>
            <person name="Vaz F.M."/>
            <person name="Ren M."/>
            <person name="Rockman H.A."/>
            <person name="Stokes D.L."/>
            <person name="Schlame M."/>
        </authorList>
    </citation>
    <scope>FUNCTION</scope>
</reference>
<reference evidence="18" key="7">
    <citation type="journal article" date="2011" name="Hum. Gene Ther.">
        <title>Characterization of a transgenic short hairpin RNA-induced murine model of Tafazzin deficiency.</title>
        <authorList>
            <person name="Soustek M.S."/>
            <person name="Falk D.J."/>
            <person name="Mah C.S."/>
            <person name="Toth M.J."/>
            <person name="Schlame M."/>
            <person name="Lewin A.S."/>
            <person name="Byrne B.J."/>
        </authorList>
    </citation>
    <scope>FUNCTION</scope>
    <scope>DISRUPTION PHENOTYPE</scope>
</reference>
<reference evidence="18" key="8">
    <citation type="journal article" date="2011" name="J. Biol. Chem.">
        <title>Cardiac and skeletal muscle defects in a mouse model of human Barth syndrome.</title>
        <authorList>
            <person name="Acehan D."/>
            <person name="Vaz F."/>
            <person name="Houtkooper R.H."/>
            <person name="James J."/>
            <person name="Moore V."/>
            <person name="Tokunaga C."/>
            <person name="Kulik W."/>
            <person name="Wansapura J."/>
            <person name="Toth M.J."/>
            <person name="Strauss A."/>
            <person name="Khuchua Z."/>
        </authorList>
    </citation>
    <scope>FUNCTION</scope>
    <scope>DISRUPTION PHENOTYPE</scope>
</reference>
<reference evidence="18" key="9">
    <citation type="journal article" date="2012" name="J. Am. Heart Assoc.">
        <title>Tafazzin knockdown in mice leads to a developmental cardiomyopathy with early diastolic dysfunction preceding myocardial noncompaction.</title>
        <authorList>
            <person name="Phoon C.K."/>
            <person name="Acehan D."/>
            <person name="Schlame M."/>
            <person name="Stokes D.L."/>
            <person name="Edelman-Novemsky I."/>
            <person name="Yu D."/>
            <person name="Xu Y."/>
            <person name="Viswanathan N."/>
            <person name="Ren M."/>
        </authorList>
    </citation>
    <scope>FUNCTION</scope>
    <scope>DISRUPTION PHENOTYPE</scope>
</reference>
<reference evidence="18" key="10">
    <citation type="journal article" date="2013" name="Front. Physiol.">
        <title>Diminished Exercise Capacity and Mitochondrial bc1 Complex Deficiency in Tafazzin-Knockdown Mice.</title>
        <authorList>
            <person name="Powers C."/>
            <person name="Huang Y."/>
            <person name="Strauss A."/>
            <person name="Khuchua Z."/>
        </authorList>
    </citation>
    <scope>DISRUPTION PHENOTYPE</scope>
</reference>
<reference evidence="18" key="11">
    <citation type="journal article" date="2015" name="Autophagy">
        <title>Cardiolipin remodeling by TAZ/tafazzin is selectively required for the initiation of mitophagy.</title>
        <authorList>
            <person name="Hsu P."/>
            <person name="Liu X."/>
            <person name="Zhang J."/>
            <person name="Wang H.G."/>
            <person name="Ye J.M."/>
            <person name="Shi Y."/>
        </authorList>
    </citation>
    <scope>FUNCTION</scope>
</reference>
<reference evidence="18" key="12">
    <citation type="journal article" date="2015" name="PLoS ONE">
        <title>Mouse Tafazzin Is Required for Male Germ Cell Meiosis and Spermatogenesis.</title>
        <authorList>
            <person name="Cadalbert L.C."/>
            <person name="Ghaffar F.N."/>
            <person name="Stevenson D."/>
            <person name="Bryson S."/>
            <person name="Vaz F.M."/>
            <person name="Gottlieb E."/>
            <person name="Strathdee D."/>
        </authorList>
    </citation>
    <scope>FUNCTION</scope>
    <scope>DISRUPTION PHENOTYPE</scope>
</reference>
<reference evidence="18" key="13">
    <citation type="journal article" date="2018" name="Biochim. Biophys. Acta">
        <title>Aberrant cardiolipin metabolism is associated with cognitive deficiency and hippocampal alteration in tafazzin knockdown mice.</title>
        <authorList>
            <person name="Cole L.K."/>
            <person name="Kim J.H."/>
            <person name="Amoscato A.A."/>
            <person name="Tyurina Y.Y."/>
            <person name="Bay R.H."/>
            <person name="Karimi B."/>
            <person name="Siddiqui T.J."/>
            <person name="Kagan V.E."/>
            <person name="Hatch G.M."/>
            <person name="Kauppinen T.M."/>
        </authorList>
    </citation>
    <scope>FUNCTION</scope>
    <scope>DISRUPTION PHENOTYPE</scope>
</reference>
<reference evidence="18" key="14">
    <citation type="journal article" date="2018" name="Mitochondrion">
        <title>Cardiac mitochondrial structure and function in tafazzin-knockdown mice.</title>
        <authorList>
            <person name="Kim J."/>
            <person name="Lee K."/>
            <person name="Fujioka H."/>
            <person name="Tandler B."/>
            <person name="Hoppel C.L."/>
        </authorList>
    </citation>
    <scope>FUNCTION</scope>
    <scope>DISRUPTION PHENOTYPE</scope>
</reference>
<keyword id="KW-0012">Acyltransferase</keyword>
<keyword id="KW-0025">Alternative splicing</keyword>
<keyword id="KW-0443">Lipid metabolism</keyword>
<keyword id="KW-0472">Membrane</keyword>
<keyword id="KW-0496">Mitochondrion</keyword>
<keyword id="KW-0999">Mitochondrion inner membrane</keyword>
<keyword id="KW-1000">Mitochondrion outer membrane</keyword>
<keyword id="KW-1185">Reference proteome</keyword>
<keyword id="KW-0808">Transferase</keyword>
<gene>
    <name type="primary">Tafazzin</name>
    <name evidence="22" type="synonym">Taz</name>
</gene>
<accession>Q91WF0</accession>
<accession>Q810E8</accession>
<evidence type="ECO:0000250" key="1">
    <source>
        <dbReference type="UniProtKB" id="Q06510"/>
    </source>
</evidence>
<evidence type="ECO:0000250" key="2">
    <source>
        <dbReference type="UniProtKB" id="Q16635"/>
    </source>
</evidence>
<evidence type="ECO:0000250" key="3">
    <source>
        <dbReference type="UniProtKB" id="Q3TFD2"/>
    </source>
</evidence>
<evidence type="ECO:0000250" key="4">
    <source>
        <dbReference type="UniProtKB" id="Q9V6G5"/>
    </source>
</evidence>
<evidence type="ECO:0000255" key="5"/>
<evidence type="ECO:0000255" key="6">
    <source>
        <dbReference type="RuleBase" id="RU365062"/>
    </source>
</evidence>
<evidence type="ECO:0000269" key="7">
    <source>
    </source>
</evidence>
<evidence type="ECO:0000269" key="8">
    <source>
    </source>
</evidence>
<evidence type="ECO:0000269" key="9">
    <source>
    </source>
</evidence>
<evidence type="ECO:0000269" key="10">
    <source>
    </source>
</evidence>
<evidence type="ECO:0000269" key="11">
    <source>
    </source>
</evidence>
<evidence type="ECO:0000269" key="12">
    <source>
    </source>
</evidence>
<evidence type="ECO:0000269" key="13">
    <source>
    </source>
</evidence>
<evidence type="ECO:0000269" key="14">
    <source>
    </source>
</evidence>
<evidence type="ECO:0000269" key="15">
    <source>
    </source>
</evidence>
<evidence type="ECO:0000269" key="16">
    <source>
    </source>
</evidence>
<evidence type="ECO:0000303" key="17">
    <source>
    </source>
</evidence>
<evidence type="ECO:0000305" key="18"/>
<evidence type="ECO:0000312" key="19">
    <source>
        <dbReference type="EMBL" id="AAH15305.1"/>
    </source>
</evidence>
<evidence type="ECO:0000312" key="20">
    <source>
        <dbReference type="EMBL" id="AAO84333.1"/>
    </source>
</evidence>
<evidence type="ECO:0000312" key="21">
    <source>
        <dbReference type="EMBL" id="BAC35860.1"/>
    </source>
</evidence>
<evidence type="ECO:0000312" key="22">
    <source>
        <dbReference type="MGI" id="MGI:109626"/>
    </source>
</evidence>
<evidence type="ECO:0000312" key="23">
    <source>
        <dbReference type="Proteomes" id="UP000000589"/>
    </source>
</evidence>
<protein>
    <recommendedName>
        <fullName evidence="22">Tafazzin</fullName>
        <shortName>Taz</shortName>
        <ecNumber evidence="2">2.3.1.-</ecNumber>
    </recommendedName>
</protein>
<name>TAZ_MOUSE</name>
<comment type="function">
    <text evidence="1 2 4 8 9 10 11 13 14 15 16">Acyltransferase required to remodel newly synthesized phospholipid cardiolipin (1',3'-bis-[1,2-diacyl-sn-glycero-3-phospho]-glycerol or CL), a key component of the mitochondrial inner membrane, with tissue specific acyl chains necessary for adequate mitochondrial function (PubMed:19114128, PubMed:21068380, PubMed:21091282, PubMed:23130124, PubMed:26114544, PubMed:30055293, PubMed:30389594). Its role in cellular physiology is to improve mitochondrial performance (By similarity). CL is critical for the coassembly of lipids and proteins in mitochondrial membranes, for instance, remodeling of the acyl groups of CL in the mitochondrial inner membrane affects the assembly and stability of respiratory chain complex IV and its supercomplex forms (By similarity). Catalyzes the transacylation between phospholipids and lysophospholipids, with the highest rate being between phosphatidylcholine (1,2-diacyl-sn-glycero-3-phosphocholine or PC) and CL. Catalyzes both 1-acyl-sn-glycero-3-phosphocholine (lysophosphatidylcholine or LPC) reacylation and PC-CL transacylation, that means, it exchanges acyl groups between CL and PC by a combination of forward and reverse transacylations. Also catalyzes transacylations between other phospholipids such as phosphatidylethanolamine (1,2-diacyl-sn-glycero-3-phosphoethanolamine or PE) and CL, between PC and PE, and between PC and phosphatidate (1,2-diacyl-sn-glycero-3-phosphate or PA), although at lower rate. Not regiospecific, it transfers acyl groups into any of the sn-1 and sn-2 positions of the monolysocardiolipin (MLCL), which is an important prerequisite for uniformity and symmetry in CL acyl distribution. Cannot transacylate dilysocardiolipin (DLCL), thus, the role of MLCL is limited to that of an acyl acceptor. CoA-independent, it can reshuffle molecular species within a single phospholipid class. Redistributes fatty acids between MLCL, CL, and other lipids, which prolongs the half-life of CL. Its action is completely reversible, which allows for cyclic changes, such as fission and fusion or bending and flattening of the membrane. Hence, by contributing to the flexibility of the lipid composition, it plays an important role in the dynamics of mitochondria membranes. Essential for the final stage of spermatogenesis, spermatid individualization (By similarity). Required for the initiation of mitophagy (PubMed:25919711). Required to ensure progression of spermatocytes through meiosis (PubMed:26114544).</text>
</comment>
<comment type="catalytic activity">
    <reaction evidence="2">
        <text>a 1-acyl-sn-glycero-3-phosphate + a 1,2-diacyl-sn-glycero-3-phospho-(1'-sn-glycerol) = 1-acyl-sn-glycero-3-phospho-(1'-sn-glycerol) + a 1,2-diacyl-sn-glycero-3-phosphate</text>
        <dbReference type="Rhea" id="RHEA:67748"/>
        <dbReference type="ChEBI" id="CHEBI:57970"/>
        <dbReference type="ChEBI" id="CHEBI:58608"/>
        <dbReference type="ChEBI" id="CHEBI:64716"/>
        <dbReference type="ChEBI" id="CHEBI:64840"/>
    </reaction>
    <physiologicalReaction direction="left-to-right" evidence="2">
        <dbReference type="Rhea" id="RHEA:67749"/>
    </physiologicalReaction>
    <physiologicalReaction direction="right-to-left" evidence="2">
        <dbReference type="Rhea" id="RHEA:67750"/>
    </physiologicalReaction>
</comment>
<comment type="catalytic activity">
    <reaction evidence="2">
        <text>1-hexadecanoyl-2-(9Z,12Z-octadecadienoyl)-sn-glycero-3-phospho-(1'-sn-glycerol) + 1-(9Z-octadecenoyl)-sn-glycero-3-phosphate = 1-(9Z)-octadecenoyl-2-(9Z,12Z)-octadecadienoyl-sn-glycero-3-phosphate + 1-hexadecanoyl-sn-glycero-3-phospho-(1'-sn-glycerol)</text>
        <dbReference type="Rhea" id="RHEA:67752"/>
        <dbReference type="ChEBI" id="CHEBI:72840"/>
        <dbReference type="ChEBI" id="CHEBI:74544"/>
        <dbReference type="ChEBI" id="CHEBI:74563"/>
        <dbReference type="ChEBI" id="CHEBI:75158"/>
    </reaction>
    <physiologicalReaction direction="left-to-right" evidence="2">
        <dbReference type="Rhea" id="RHEA:67753"/>
    </physiologicalReaction>
    <physiologicalReaction direction="right-to-left" evidence="2">
        <dbReference type="Rhea" id="RHEA:67754"/>
    </physiologicalReaction>
</comment>
<comment type="catalytic activity">
    <reaction evidence="2">
        <text>1'-[1,2-diacyl-sn-glycero-3-phospho],3'-[1-acyl-sn-glycero-3-phospho]-glycerol + a 1,2-diacyl-sn-glycero-3-phosphocholine = a cardiolipin + a 1-acyl-sn-glycero-3-phosphocholine</text>
        <dbReference type="Rhea" id="RHEA:33731"/>
        <dbReference type="ChEBI" id="CHEBI:57643"/>
        <dbReference type="ChEBI" id="CHEBI:58168"/>
        <dbReference type="ChEBI" id="CHEBI:62237"/>
        <dbReference type="ChEBI" id="CHEBI:64743"/>
    </reaction>
    <physiologicalReaction direction="left-to-right" evidence="2">
        <dbReference type="Rhea" id="RHEA:33732"/>
    </physiologicalReaction>
    <physiologicalReaction direction="right-to-left" evidence="2">
        <dbReference type="Rhea" id="RHEA:33733"/>
    </physiologicalReaction>
</comment>
<comment type="catalytic activity">
    <reaction evidence="2">
        <text>1-hexadecanoyl-2-(9Z,12Z-octadecadienoyl)-sn-glycero-3-phosphocholine + 1-hexadecanoyl-sn-glycero-3-phosphocholine = 2-(9Z,12Z-octadecadienoyl)-sn-glycero-3-phosphocholine + 1,2-dihexadecanoyl-sn-glycero-3-phosphocholine</text>
        <dbReference type="Rhea" id="RHEA:68988"/>
        <dbReference type="ChEBI" id="CHEBI:72998"/>
        <dbReference type="ChEBI" id="CHEBI:72999"/>
        <dbReference type="ChEBI" id="CHEBI:73002"/>
        <dbReference type="ChEBI" id="CHEBI:76084"/>
    </reaction>
    <physiologicalReaction direction="left-to-right" evidence="2">
        <dbReference type="Rhea" id="RHEA:68989"/>
    </physiologicalReaction>
    <physiologicalReaction direction="right-to-left" evidence="2">
        <dbReference type="Rhea" id="RHEA:68990"/>
    </physiologicalReaction>
</comment>
<comment type="catalytic activity">
    <reaction evidence="2">
        <text>1,2-di-(9Z-octadecenoyl)-sn-glycero-3-phosphocholine + 1-hexadecanoyl-sn-glycero-3-phosphocholine = 1-hexadecanoyl-2-(9Z-octadecenoyl)-sn-glycero-3-phosphocholine + 1-(9Z-octadecenoyl)-sn-glycero-3-phosphocholine</text>
        <dbReference type="Rhea" id="RHEA:43816"/>
        <dbReference type="ChEBI" id="CHEBI:28610"/>
        <dbReference type="ChEBI" id="CHEBI:72998"/>
        <dbReference type="ChEBI" id="CHEBI:73001"/>
        <dbReference type="ChEBI" id="CHEBI:74669"/>
    </reaction>
    <physiologicalReaction direction="left-to-right" evidence="2">
        <dbReference type="Rhea" id="RHEA:43817"/>
    </physiologicalReaction>
    <physiologicalReaction direction="right-to-left" evidence="2">
        <dbReference type="Rhea" id="RHEA:43818"/>
    </physiologicalReaction>
</comment>
<comment type="pathway">
    <text evidence="2">Phospholipid metabolism.</text>
</comment>
<comment type="subunit">
    <text evidence="2">Associates with multiple protein complexes.</text>
</comment>
<comment type="subcellular location">
    <subcellularLocation>
        <location evidence="2">Mitochondrion outer membrane</location>
        <topology evidence="2">Peripheral membrane protein</topology>
        <orientation evidence="2">Intermembrane side</orientation>
    </subcellularLocation>
    <subcellularLocation>
        <location evidence="2">Mitochondrion inner membrane</location>
        <topology evidence="2">Peripheral membrane protein</topology>
        <orientation evidence="2">Intermembrane side</orientation>
    </subcellularLocation>
</comment>
<comment type="alternative products">
    <event type="alternative splicing"/>
    <isoform>
        <id>Q91WF0-1</id>
        <name>1</name>
        <name evidence="17">Full-length</name>
        <sequence type="displayed"/>
    </isoform>
    <isoform>
        <id>Q91WF0-2</id>
        <name>2</name>
        <name evidence="17">Exon-9-deleted</name>
        <sequence type="described" ref="VSP_061044 VSP_061045"/>
    </isoform>
</comment>
<comment type="tissue specificity">
    <text evidence="7">Widely expressed with highest expression in skeletal muscle and kidney.</text>
</comment>
<comment type="domain">
    <text evidence="3">The HXXXXD motif is essential for acyltransferase activity.</text>
</comment>
<comment type="disruption phenotype">
    <text evidence="9 10 11 12 14 15 16">Impaired cardiolipin (CL) metabolism with accumulation of monolysocardiolipin (MLCL) and reduction of mature CL in embryonic stem cells, male sterility, reduced testis size and disruption in progression of spermatocytes through meiosis (PubMed:26114544). Spermatocytes fail to progress past the pachytene stage of meiosis and have higher levels of DNA double strand damage and increased levels of endogenous retrotransposon activity (PubMed:26114544). RNAi-mediated knockdown results in prenatal and perinatal lethality, impaired CL metabolism resulting in absence of tetralineoyl-cardiolipin and accumulation of MLCL in cardiac and skeletal muscle, abnormal ultrastructure of mitochondria and mitochondrial-associated membranes, impaired skeletal muscle contractile properties, early diastolic dysfunction, and cardiac abnormalities such as myocardial thinning, hypertrabeculation, non-compaction, defective ventricular septation and left ventricular dilation (PubMed:21068380, PubMed:21091282, PubMed:23130124, PubMed:30389594). RNAi-mediated knockdown also results in impaired CL metabolism in the brain with reduced total CL levels and significantly increased MLCL levels, impaired brain mitochondrial respiration, elevated brain production of reactive oxygen species, significant memory deficiency, derangement of the hippocampal CA1 neuronal layer and elevated microglia activity (PubMed:30055293). Hepatic CL levels remain normal (PubMed:30055293). RNAi-mediated knockdown does not affect resting metabolic rate but markedly impairs oxygen consumption rates during exercise and diminishes mitochondrial complex III activity (PubMed:23616771).</text>
</comment>
<comment type="miscellaneous">
    <text evidence="2">The enzyme was named after a masochistic character Tafazzi, once popular on Italian television, apparently due to the difficulty encountered for its identification and characterization.</text>
</comment>
<comment type="similarity">
    <text evidence="6">Belongs to the taffazin family.</text>
</comment>
<feature type="chain" id="PRO_0000452721" description="Tafazzin">
    <location>
        <begin position="1"/>
        <end position="262"/>
    </location>
</feature>
<feature type="topological domain" description="Mitochondrial intermembrane" evidence="2">
    <location>
        <begin position="1"/>
        <end position="14"/>
    </location>
</feature>
<feature type="intramembrane region" evidence="5">
    <location>
        <begin position="15"/>
        <end position="35"/>
    </location>
</feature>
<feature type="topological domain" description="Mitochondrial intermembrane" evidence="2">
    <location>
        <begin position="36"/>
        <end position="262"/>
    </location>
</feature>
<feature type="region of interest" description="Mitochondrial targeting sequence" evidence="2">
    <location>
        <begin position="82"/>
        <end position="92"/>
    </location>
</feature>
<feature type="region of interest" description="Mitochondrial targeting sequence" evidence="2">
    <location>
        <begin position="155"/>
        <end position="190"/>
    </location>
</feature>
<feature type="short sequence motif" description="HXXXXD motif" evidence="3">
    <location>
        <begin position="69"/>
        <end position="74"/>
    </location>
</feature>
<feature type="splice variant" id="VSP_061044" description="In isoform 2.">
    <original>GMNDVLPNSPPYFPRF</original>
    <variation>ENHRADWEALQYTPCA</variation>
    <location>
        <begin position="186"/>
        <end position="201"/>
    </location>
</feature>
<feature type="splice variant" id="VSP_061045" description="In isoform 2.">
    <location>
        <begin position="202"/>
        <end position="262"/>
    </location>
</feature>
<dbReference type="EC" id="2.3.1.-" evidence="2"/>
<dbReference type="EMBL" id="AY231459">
    <property type="protein sequence ID" value="AAO84333.1"/>
    <property type="molecule type" value="mRNA"/>
</dbReference>
<dbReference type="EMBL" id="AY231460">
    <property type="protein sequence ID" value="AAO84334.1"/>
    <property type="molecule type" value="mRNA"/>
</dbReference>
<dbReference type="EMBL" id="AK075615">
    <property type="protein sequence ID" value="BAC35860.1"/>
    <property type="molecule type" value="mRNA"/>
</dbReference>
<dbReference type="EMBL" id="AK160327">
    <property type="protein sequence ID" value="BAE35740.1"/>
    <property type="molecule type" value="mRNA"/>
</dbReference>
<dbReference type="EMBL" id="AL807376">
    <property type="protein sequence ID" value="CAM24340.1"/>
    <property type="molecule type" value="Genomic_DNA"/>
</dbReference>
<dbReference type="EMBL" id="BC015305">
    <property type="protein sequence ID" value="AAH15305.1"/>
    <property type="molecule type" value="mRNA"/>
</dbReference>
<dbReference type="CCDS" id="CCDS30224.1">
    <molecule id="Q91WF0-1"/>
</dbReference>
<dbReference type="CCDS" id="CCDS57764.1">
    <molecule id="Q91WF0-2"/>
</dbReference>
<dbReference type="RefSeq" id="NP_001229545.1">
    <molecule id="Q91WF0-2"/>
    <property type="nucleotide sequence ID" value="NM_001242616.2"/>
</dbReference>
<dbReference type="RefSeq" id="NP_001277667.1">
    <property type="nucleotide sequence ID" value="NM_001290738.1"/>
</dbReference>
<dbReference type="RefSeq" id="NP_852657.1">
    <molecule id="Q91WF0-1"/>
    <property type="nucleotide sequence ID" value="NM_181516.6"/>
</dbReference>
<dbReference type="RefSeq" id="XP_006528309.1">
    <molecule id="Q91WF0-1"/>
    <property type="nucleotide sequence ID" value="XM_006528246.3"/>
</dbReference>
<dbReference type="RefSeq" id="XP_006528313.1">
    <molecule id="Q91WF0-2"/>
    <property type="nucleotide sequence ID" value="XM_006528250.4"/>
</dbReference>
<dbReference type="RefSeq" id="XP_036017969.1">
    <molecule id="Q91WF0-1"/>
    <property type="nucleotide sequence ID" value="XM_036162076.1"/>
</dbReference>
<dbReference type="SMR" id="Q91WF0"/>
<dbReference type="FunCoup" id="Q91WF0">
    <property type="interactions" value="1337"/>
</dbReference>
<dbReference type="GlyGen" id="Q91WF0">
    <property type="glycosylation" value="1 site, 1 N-linked glycan (1 site)"/>
</dbReference>
<dbReference type="iPTMnet" id="Q91WF0"/>
<dbReference type="PhosphoSitePlus" id="Q91WF0"/>
<dbReference type="ProteomicsDB" id="330377"/>
<dbReference type="ProteomicsDB" id="335234"/>
<dbReference type="Antibodypedia" id="31212">
    <property type="antibodies" value="451 antibodies from 36 providers"/>
</dbReference>
<dbReference type="DNASU" id="66826"/>
<dbReference type="Ensembl" id="ENSMUST00000069722.13">
    <molecule id="Q91WF0-1"/>
    <property type="protein sequence ID" value="ENSMUSP00000065270.7"/>
    <property type="gene ID" value="ENSMUSG00000009995.18"/>
</dbReference>
<dbReference type="Ensembl" id="ENSMUST00000124200.8">
    <molecule id="Q91WF0-2"/>
    <property type="protein sequence ID" value="ENSMUSP00000134745.2"/>
    <property type="gene ID" value="ENSMUSG00000009995.18"/>
</dbReference>
<dbReference type="GeneID" id="66826"/>
<dbReference type="KEGG" id="mmu:66826"/>
<dbReference type="UCSC" id="uc009tog.3">
    <molecule id="Q91WF0-1"/>
    <property type="organism name" value="mouse"/>
</dbReference>
<dbReference type="UCSC" id="uc009toi.3">
    <property type="organism name" value="mouse"/>
</dbReference>
<dbReference type="AGR" id="MGI:109626"/>
<dbReference type="CTD" id="6901"/>
<dbReference type="MGI" id="MGI:109626">
    <property type="gene designation" value="Tafazzin"/>
</dbReference>
<dbReference type="VEuPathDB" id="HostDB:ENSMUSG00000009995"/>
<dbReference type="GeneTree" id="ENSGT00390000018621"/>
<dbReference type="InParanoid" id="Q91WF0"/>
<dbReference type="PhylomeDB" id="Q91WF0"/>
<dbReference type="Reactome" id="R-MMU-1482798">
    <property type="pathway name" value="Acyl chain remodeling of CL"/>
</dbReference>
<dbReference type="BioGRID-ORCS" id="66826">
    <property type="hits" value="19 hits in 80 CRISPR screens"/>
</dbReference>
<dbReference type="ChiTaRS" id="Taz">
    <property type="organism name" value="mouse"/>
</dbReference>
<dbReference type="PRO" id="PR:Q91WF0"/>
<dbReference type="Proteomes" id="UP000000589">
    <property type="component" value="Chromosome X"/>
</dbReference>
<dbReference type="Bgee" id="ENSMUSG00000009995">
    <property type="expression patterns" value="Expressed in retinal neural layer and 251 other cell types or tissues"/>
</dbReference>
<dbReference type="ExpressionAtlas" id="Q91WF0">
    <property type="expression patterns" value="baseline and differential"/>
</dbReference>
<dbReference type="GO" id="GO:0005743">
    <property type="term" value="C:mitochondrial inner membrane"/>
    <property type="evidence" value="ECO:0007669"/>
    <property type="project" value="UniProtKB-SubCell"/>
</dbReference>
<dbReference type="GO" id="GO:0005741">
    <property type="term" value="C:mitochondrial outer membrane"/>
    <property type="evidence" value="ECO:0007669"/>
    <property type="project" value="UniProtKB-SubCell"/>
</dbReference>
<dbReference type="GO" id="GO:0005739">
    <property type="term" value="C:mitochondrion"/>
    <property type="evidence" value="ECO:0000250"/>
    <property type="project" value="UniProtKB"/>
</dbReference>
<dbReference type="GO" id="GO:0016746">
    <property type="term" value="F:acyltransferase activity"/>
    <property type="evidence" value="ECO:0007669"/>
    <property type="project" value="UniProtKB-KW"/>
</dbReference>
<dbReference type="GO" id="GO:0035965">
    <property type="term" value="P:cardiolipin acyl-chain remodeling"/>
    <property type="evidence" value="ECO:0000250"/>
    <property type="project" value="UniProtKB"/>
</dbReference>
<dbReference type="GO" id="GO:0032048">
    <property type="term" value="P:cardiolipin metabolic process"/>
    <property type="evidence" value="ECO:0000315"/>
    <property type="project" value="UniProtKB"/>
</dbReference>
<dbReference type="GO" id="GO:0007007">
    <property type="term" value="P:inner mitochondrial membrane organization"/>
    <property type="evidence" value="ECO:0000315"/>
    <property type="project" value="UniProtKB"/>
</dbReference>
<dbReference type="GO" id="GO:0046471">
    <property type="term" value="P:phosphatidylglycerol metabolic process"/>
    <property type="evidence" value="ECO:0000266"/>
    <property type="project" value="MGI"/>
</dbReference>
<dbReference type="CDD" id="cd07989">
    <property type="entry name" value="LPLAT_AGPAT-like"/>
    <property type="match status" value="1"/>
</dbReference>
<dbReference type="InterPro" id="IPR002123">
    <property type="entry name" value="Plipid/glycerol_acylTrfase"/>
</dbReference>
<dbReference type="InterPro" id="IPR000872">
    <property type="entry name" value="Tafazzin"/>
</dbReference>
<dbReference type="PANTHER" id="PTHR12497:SF0">
    <property type="entry name" value="TAFAZZIN"/>
    <property type="match status" value="1"/>
</dbReference>
<dbReference type="PANTHER" id="PTHR12497">
    <property type="entry name" value="TAZ PROTEIN TAFAZZIN"/>
    <property type="match status" value="1"/>
</dbReference>
<dbReference type="Pfam" id="PF01553">
    <property type="entry name" value="Acyltransferase"/>
    <property type="match status" value="1"/>
</dbReference>
<dbReference type="PRINTS" id="PR00979">
    <property type="entry name" value="TAFAZZIN"/>
</dbReference>
<dbReference type="SMART" id="SM00563">
    <property type="entry name" value="PlsC"/>
    <property type="match status" value="1"/>
</dbReference>
<dbReference type="SUPFAM" id="SSF69593">
    <property type="entry name" value="Glycerol-3-phosphate (1)-acyltransferase"/>
    <property type="match status" value="1"/>
</dbReference>
<organism evidence="19">
    <name type="scientific">Mus musculus</name>
    <name type="common">Mouse</name>
    <dbReference type="NCBI Taxonomy" id="10090"/>
    <lineage>
        <taxon>Eukaryota</taxon>
        <taxon>Metazoa</taxon>
        <taxon>Chordata</taxon>
        <taxon>Craniata</taxon>
        <taxon>Vertebrata</taxon>
        <taxon>Euteleostomi</taxon>
        <taxon>Mammalia</taxon>
        <taxon>Eutheria</taxon>
        <taxon>Euarchontoglires</taxon>
        <taxon>Glires</taxon>
        <taxon>Rodentia</taxon>
        <taxon>Myomorpha</taxon>
        <taxon>Muroidea</taxon>
        <taxon>Muridae</taxon>
        <taxon>Murinae</taxon>
        <taxon>Mus</taxon>
        <taxon>Mus</taxon>
    </lineage>
</organism>